<evidence type="ECO:0000255" key="1">
    <source>
        <dbReference type="HAMAP-Rule" id="MF_00383"/>
    </source>
</evidence>
<evidence type="ECO:0000255" key="2">
    <source>
        <dbReference type="PROSITE-ProRule" id="PRU00469"/>
    </source>
</evidence>
<evidence type="ECO:0000269" key="3">
    <source>
    </source>
</evidence>
<proteinExistence type="evidence at transcript level"/>
<protein>
    <recommendedName>
        <fullName evidence="1">Transcription initiation factor IIB 2</fullName>
        <shortName evidence="1">TFIIB 2</shortName>
    </recommendedName>
</protein>
<dbReference type="EMBL" id="AE006641">
    <property type="protein sequence ID" value="AAK41221.1"/>
    <property type="molecule type" value="Genomic_DNA"/>
</dbReference>
<dbReference type="PIR" id="F90245">
    <property type="entry name" value="F90245"/>
</dbReference>
<dbReference type="RefSeq" id="WP_009992381.1">
    <property type="nucleotide sequence ID" value="NC_002754.1"/>
</dbReference>
<dbReference type="SMR" id="P58110"/>
<dbReference type="FunCoup" id="P58110">
    <property type="interactions" value="27"/>
</dbReference>
<dbReference type="STRING" id="273057.SSO0946"/>
<dbReference type="PaxDb" id="273057-SSO0946"/>
<dbReference type="EnsemblBacteria" id="AAK41221">
    <property type="protein sequence ID" value="AAK41221"/>
    <property type="gene ID" value="SSO0946"/>
</dbReference>
<dbReference type="KEGG" id="sso:SSO0946"/>
<dbReference type="PATRIC" id="fig|273057.12.peg.941"/>
<dbReference type="eggNOG" id="arCOG01981">
    <property type="taxonomic scope" value="Archaea"/>
</dbReference>
<dbReference type="HOGENOM" id="CLU_043736_0_1_2"/>
<dbReference type="InParanoid" id="P58110"/>
<dbReference type="PhylomeDB" id="P58110"/>
<dbReference type="Proteomes" id="UP000001974">
    <property type="component" value="Chromosome"/>
</dbReference>
<dbReference type="GO" id="GO:0097550">
    <property type="term" value="C:transcription preinitiation complex"/>
    <property type="evidence" value="ECO:0000318"/>
    <property type="project" value="GO_Central"/>
</dbReference>
<dbReference type="GO" id="GO:0003700">
    <property type="term" value="F:DNA-binding transcription factor activity"/>
    <property type="evidence" value="ECO:0007669"/>
    <property type="project" value="UniProtKB-UniRule"/>
</dbReference>
<dbReference type="GO" id="GO:0017025">
    <property type="term" value="F:TBP-class protein binding"/>
    <property type="evidence" value="ECO:0007669"/>
    <property type="project" value="InterPro"/>
</dbReference>
<dbReference type="GO" id="GO:0008270">
    <property type="term" value="F:zinc ion binding"/>
    <property type="evidence" value="ECO:0007669"/>
    <property type="project" value="UniProtKB-UniRule"/>
</dbReference>
<dbReference type="GO" id="GO:0006352">
    <property type="term" value="P:DNA-templated transcription initiation"/>
    <property type="evidence" value="ECO:0000318"/>
    <property type="project" value="GO_Central"/>
</dbReference>
<dbReference type="GO" id="GO:0070897">
    <property type="term" value="P:transcription preinitiation complex assembly"/>
    <property type="evidence" value="ECO:0007669"/>
    <property type="project" value="InterPro"/>
</dbReference>
<dbReference type="CDD" id="cd20550">
    <property type="entry name" value="CYCLIN_TFIIB_archaea_like_rpt2"/>
    <property type="match status" value="1"/>
</dbReference>
<dbReference type="Gene3D" id="1.10.472.170">
    <property type="match status" value="1"/>
</dbReference>
<dbReference type="Gene3D" id="1.10.472.10">
    <property type="entry name" value="Cyclin-like"/>
    <property type="match status" value="1"/>
</dbReference>
<dbReference type="HAMAP" id="MF_00383">
    <property type="entry name" value="TF2B_arch"/>
    <property type="match status" value="1"/>
</dbReference>
<dbReference type="InterPro" id="IPR013763">
    <property type="entry name" value="Cyclin-like_dom"/>
</dbReference>
<dbReference type="InterPro" id="IPR036915">
    <property type="entry name" value="Cyclin-like_sf"/>
</dbReference>
<dbReference type="InterPro" id="IPR000812">
    <property type="entry name" value="TFIIB"/>
</dbReference>
<dbReference type="InterPro" id="IPR023484">
    <property type="entry name" value="TFIIB_arc"/>
</dbReference>
<dbReference type="InterPro" id="IPR013150">
    <property type="entry name" value="TFIIB_cyclin"/>
</dbReference>
<dbReference type="InterPro" id="IPR013137">
    <property type="entry name" value="Znf_TFIIB"/>
</dbReference>
<dbReference type="PANTHER" id="PTHR11618:SF13">
    <property type="entry name" value="TRANSCRIPTION INITIATION FACTOR IIB"/>
    <property type="match status" value="1"/>
</dbReference>
<dbReference type="PANTHER" id="PTHR11618">
    <property type="entry name" value="TRANSCRIPTION INITIATION FACTOR IIB-RELATED"/>
    <property type="match status" value="1"/>
</dbReference>
<dbReference type="Pfam" id="PF00382">
    <property type="entry name" value="TFIIB"/>
    <property type="match status" value="2"/>
</dbReference>
<dbReference type="Pfam" id="PF08271">
    <property type="entry name" value="Zn_Ribbon_TF"/>
    <property type="match status" value="1"/>
</dbReference>
<dbReference type="PRINTS" id="PR00685">
    <property type="entry name" value="TIFACTORIIB"/>
</dbReference>
<dbReference type="SMART" id="SM00385">
    <property type="entry name" value="CYCLIN"/>
    <property type="match status" value="2"/>
</dbReference>
<dbReference type="SUPFAM" id="SSF47954">
    <property type="entry name" value="Cyclin-like"/>
    <property type="match status" value="2"/>
</dbReference>
<dbReference type="SUPFAM" id="SSF57783">
    <property type="entry name" value="Zinc beta-ribbon"/>
    <property type="match status" value="1"/>
</dbReference>
<dbReference type="PROSITE" id="PS51134">
    <property type="entry name" value="ZF_TFIIB"/>
    <property type="match status" value="1"/>
</dbReference>
<sequence>MKCPYCKTDNAITYDVEKGMYVCTNCASVIEDSAVDPGPDWRAYNAKDRNEKERVGSPSTPKVHDWGFHTIIGYGRAKDRLKTLKMQRMQNKIRVSPKDKKLVTLLSILNDESSKLELPEHVKETASLIIRKMVETGLTKRIDQYTLIVAALYYSCQVNNIPRHLQEFKVRYSISSSEFWSALKRVQYVANSIPGFRPKIKPAEYIPKILYKLNLPPIIGTKASELVDLMHKQGLTSGKGYLSLSAASVYLISALMDIKKTQKEVADSLDITEVTIRNRYKDIVDNFDIVVTL</sequence>
<feature type="chain" id="PRO_0000119336" description="Transcription initiation factor IIB 2">
    <location>
        <begin position="1"/>
        <end position="293"/>
    </location>
</feature>
<feature type="repeat" description="1">
    <location>
        <begin position="107"/>
        <end position="193"/>
    </location>
</feature>
<feature type="repeat" description="2">
    <location>
        <begin position="204"/>
        <end position="285"/>
    </location>
</feature>
<feature type="zinc finger region" description="TFIIB-type" evidence="2">
    <location>
        <begin position="1"/>
        <end position="31"/>
    </location>
</feature>
<feature type="binding site" evidence="2">
    <location>
        <position position="3"/>
    </location>
    <ligand>
        <name>Zn(2+)</name>
        <dbReference type="ChEBI" id="CHEBI:29105"/>
    </ligand>
</feature>
<feature type="binding site" evidence="2">
    <location>
        <position position="6"/>
    </location>
    <ligand>
        <name>Zn(2+)</name>
        <dbReference type="ChEBI" id="CHEBI:29105"/>
    </ligand>
</feature>
<feature type="binding site" evidence="2">
    <location>
        <position position="23"/>
    </location>
    <ligand>
        <name>Zn(2+)</name>
        <dbReference type="ChEBI" id="CHEBI:29105"/>
    </ligand>
</feature>
<feature type="binding site" evidence="2">
    <location>
        <position position="26"/>
    </location>
    <ligand>
        <name>Zn(2+)</name>
        <dbReference type="ChEBI" id="CHEBI:29105"/>
    </ligand>
</feature>
<reference key="1">
    <citation type="journal article" date="2001" name="Proc. Natl. Acad. Sci. U.S.A.">
        <title>The complete genome of the crenarchaeon Sulfolobus solfataricus P2.</title>
        <authorList>
            <person name="She Q."/>
            <person name="Singh R.K."/>
            <person name="Confalonieri F."/>
            <person name="Zivanovic Y."/>
            <person name="Allard G."/>
            <person name="Awayez M.J."/>
            <person name="Chan-Weiher C.C.-Y."/>
            <person name="Clausen I.G."/>
            <person name="Curtis B.A."/>
            <person name="De Moors A."/>
            <person name="Erauso G."/>
            <person name="Fletcher C."/>
            <person name="Gordon P.M.K."/>
            <person name="Heikamp-de Jong I."/>
            <person name="Jeffries A.C."/>
            <person name="Kozera C.J."/>
            <person name="Medina N."/>
            <person name="Peng X."/>
            <person name="Thi-Ngoc H.P."/>
            <person name="Redder P."/>
            <person name="Schenk M.E."/>
            <person name="Theriault C."/>
            <person name="Tolstrup N."/>
            <person name="Charlebois R.L."/>
            <person name="Doolittle W.F."/>
            <person name="Duguet M."/>
            <person name="Gaasterland T."/>
            <person name="Garrett R.A."/>
            <person name="Ragan M.A."/>
            <person name="Sensen C.W."/>
            <person name="Van der Oost J."/>
        </authorList>
    </citation>
    <scope>NUCLEOTIDE SEQUENCE [LARGE SCALE GENOMIC DNA]</scope>
    <source>
        <strain>ATCC 35092 / DSM 1617 / JCM 11322 / P2</strain>
    </source>
</reference>
<reference key="2">
    <citation type="journal article" date="2008" name="J. Virol.">
        <title>Transcriptome analysis of infection of the archaeon Sulfolobus solfataricus with Sulfolobus turreted icosahedral virus.</title>
        <authorList>
            <person name="Ortmann A.C."/>
            <person name="Brumfield S.K."/>
            <person name="Walther J."/>
            <person name="McInnerney K."/>
            <person name="Brouns S.J."/>
            <person name="van de Werken H.J."/>
            <person name="Bothner B."/>
            <person name="Douglas T."/>
            <person name="van de Oost J."/>
            <person name="Young M.J."/>
        </authorList>
    </citation>
    <scope>INDUCTION BY VIRUS (MICROBIAL INFECTION)</scope>
    <source>
        <strain>2-2-12</strain>
    </source>
</reference>
<accession>P58110</accession>
<comment type="function">
    <text evidence="1">Stabilizes TBP binding to an archaeal box-A promoter. Also responsible for recruiting RNA polymerase II to the pre-initiation complex (DNA-TBP-TFIIB).</text>
</comment>
<comment type="induction">
    <text evidence="3">(Microbial infection) At least 4-fold induced following infection by Sulfolobus turreted icosahedral virus 1 (STIV-1) in strain 2-2-12.</text>
</comment>
<comment type="miscellaneous">
    <text evidence="3">Strain 2-2-12 is a substrain of P2 that is highly susceptible to infection by Sulfolobus turreted icosahedral virus 1 (STIV-1).</text>
</comment>
<comment type="similarity">
    <text evidence="1">Belongs to the TFIIB family.</text>
</comment>
<organism>
    <name type="scientific">Saccharolobus solfataricus (strain ATCC 35092 / DSM 1617 / JCM 11322 / P2)</name>
    <name type="common">Sulfolobus solfataricus</name>
    <dbReference type="NCBI Taxonomy" id="273057"/>
    <lineage>
        <taxon>Archaea</taxon>
        <taxon>Thermoproteota</taxon>
        <taxon>Thermoprotei</taxon>
        <taxon>Sulfolobales</taxon>
        <taxon>Sulfolobaceae</taxon>
        <taxon>Saccharolobus</taxon>
    </lineage>
</organism>
<gene>
    <name evidence="1" type="primary">tfbB</name>
    <name type="synonym">tfb-2</name>
    <name type="ordered locus">SSO0946</name>
    <name type="ORF">C33_019</name>
</gene>
<name>TF2B2_SACS2</name>
<keyword id="KW-0479">Metal-binding</keyword>
<keyword id="KW-1185">Reference proteome</keyword>
<keyword id="KW-0677">Repeat</keyword>
<keyword id="KW-0804">Transcription</keyword>
<keyword id="KW-0805">Transcription regulation</keyword>
<keyword id="KW-0862">Zinc</keyword>
<keyword id="KW-0863">Zinc-finger</keyword>